<gene>
    <name evidence="1" type="primary">thiC</name>
    <name type="ordered locus">NATL1_20631</name>
</gene>
<accession>A2C559</accession>
<organism>
    <name type="scientific">Prochlorococcus marinus (strain NATL1A)</name>
    <dbReference type="NCBI Taxonomy" id="167555"/>
    <lineage>
        <taxon>Bacteria</taxon>
        <taxon>Bacillati</taxon>
        <taxon>Cyanobacteriota</taxon>
        <taxon>Cyanophyceae</taxon>
        <taxon>Synechococcales</taxon>
        <taxon>Prochlorococcaceae</taxon>
        <taxon>Prochlorococcus</taxon>
    </lineage>
</organism>
<evidence type="ECO:0000255" key="1">
    <source>
        <dbReference type="HAMAP-Rule" id="MF_00089"/>
    </source>
</evidence>
<feature type="chain" id="PRO_1000004787" description="Phosphomethylpyrimidine synthase">
    <location>
        <begin position="1"/>
        <end position="466"/>
    </location>
</feature>
<feature type="binding site" evidence="1">
    <location>
        <position position="80"/>
    </location>
    <ligand>
        <name>substrate</name>
    </ligand>
</feature>
<feature type="binding site" evidence="1">
    <location>
        <position position="109"/>
    </location>
    <ligand>
        <name>substrate</name>
    </ligand>
</feature>
<feature type="binding site" evidence="1">
    <location>
        <position position="139"/>
    </location>
    <ligand>
        <name>substrate</name>
    </ligand>
</feature>
<feature type="binding site" evidence="1">
    <location>
        <position position="175"/>
    </location>
    <ligand>
        <name>substrate</name>
    </ligand>
</feature>
<feature type="binding site" evidence="1">
    <location>
        <begin position="195"/>
        <end position="197"/>
    </location>
    <ligand>
        <name>substrate</name>
    </ligand>
</feature>
<feature type="binding site" evidence="1">
    <location>
        <begin position="236"/>
        <end position="239"/>
    </location>
    <ligand>
        <name>substrate</name>
    </ligand>
</feature>
<feature type="binding site" evidence="1">
    <location>
        <position position="275"/>
    </location>
    <ligand>
        <name>substrate</name>
    </ligand>
</feature>
<feature type="binding site" evidence="1">
    <location>
        <position position="279"/>
    </location>
    <ligand>
        <name>Zn(2+)</name>
        <dbReference type="ChEBI" id="CHEBI:29105"/>
    </ligand>
</feature>
<feature type="binding site" evidence="1">
    <location>
        <position position="302"/>
    </location>
    <ligand>
        <name>substrate</name>
    </ligand>
</feature>
<feature type="binding site" evidence="1">
    <location>
        <position position="343"/>
    </location>
    <ligand>
        <name>Zn(2+)</name>
        <dbReference type="ChEBI" id="CHEBI:29105"/>
    </ligand>
</feature>
<feature type="binding site" evidence="1">
    <location>
        <position position="423"/>
    </location>
    <ligand>
        <name>[4Fe-4S] cluster</name>
        <dbReference type="ChEBI" id="CHEBI:49883"/>
        <note>4Fe-4S-S-AdoMet</note>
    </ligand>
</feature>
<feature type="binding site" evidence="1">
    <location>
        <position position="426"/>
    </location>
    <ligand>
        <name>[4Fe-4S] cluster</name>
        <dbReference type="ChEBI" id="CHEBI:49883"/>
        <note>4Fe-4S-S-AdoMet</note>
    </ligand>
</feature>
<feature type="binding site" evidence="1">
    <location>
        <position position="431"/>
    </location>
    <ligand>
        <name>[4Fe-4S] cluster</name>
        <dbReference type="ChEBI" id="CHEBI:49883"/>
        <note>4Fe-4S-S-AdoMet</note>
    </ligand>
</feature>
<dbReference type="EC" id="4.1.99.17" evidence="1"/>
<dbReference type="EMBL" id="CP000553">
    <property type="protein sequence ID" value="ABM76619.1"/>
    <property type="molecule type" value="Genomic_DNA"/>
</dbReference>
<dbReference type="RefSeq" id="WP_011824566.1">
    <property type="nucleotide sequence ID" value="NC_008819.1"/>
</dbReference>
<dbReference type="SMR" id="A2C559"/>
<dbReference type="KEGG" id="pme:NATL1_20631"/>
<dbReference type="eggNOG" id="COG0422">
    <property type="taxonomic scope" value="Bacteria"/>
</dbReference>
<dbReference type="HOGENOM" id="CLU_013181_2_1_3"/>
<dbReference type="UniPathway" id="UPA00060"/>
<dbReference type="Proteomes" id="UP000002592">
    <property type="component" value="Chromosome"/>
</dbReference>
<dbReference type="GO" id="GO:0005829">
    <property type="term" value="C:cytosol"/>
    <property type="evidence" value="ECO:0007669"/>
    <property type="project" value="TreeGrafter"/>
</dbReference>
<dbReference type="GO" id="GO:0051539">
    <property type="term" value="F:4 iron, 4 sulfur cluster binding"/>
    <property type="evidence" value="ECO:0007669"/>
    <property type="project" value="UniProtKB-KW"/>
</dbReference>
<dbReference type="GO" id="GO:0016830">
    <property type="term" value="F:carbon-carbon lyase activity"/>
    <property type="evidence" value="ECO:0007669"/>
    <property type="project" value="InterPro"/>
</dbReference>
<dbReference type="GO" id="GO:0008270">
    <property type="term" value="F:zinc ion binding"/>
    <property type="evidence" value="ECO:0007669"/>
    <property type="project" value="UniProtKB-UniRule"/>
</dbReference>
<dbReference type="GO" id="GO:0009228">
    <property type="term" value="P:thiamine biosynthetic process"/>
    <property type="evidence" value="ECO:0007669"/>
    <property type="project" value="UniProtKB-KW"/>
</dbReference>
<dbReference type="GO" id="GO:0009229">
    <property type="term" value="P:thiamine diphosphate biosynthetic process"/>
    <property type="evidence" value="ECO:0007669"/>
    <property type="project" value="UniProtKB-UniRule"/>
</dbReference>
<dbReference type="FunFam" id="3.20.20.540:FF:000001">
    <property type="entry name" value="Phosphomethylpyrimidine synthase"/>
    <property type="match status" value="1"/>
</dbReference>
<dbReference type="Gene3D" id="6.10.250.620">
    <property type="match status" value="1"/>
</dbReference>
<dbReference type="Gene3D" id="3.20.20.540">
    <property type="entry name" value="Radical SAM ThiC family, central domain"/>
    <property type="match status" value="1"/>
</dbReference>
<dbReference type="HAMAP" id="MF_00089">
    <property type="entry name" value="ThiC"/>
    <property type="match status" value="1"/>
</dbReference>
<dbReference type="InterPro" id="IPR037509">
    <property type="entry name" value="ThiC"/>
</dbReference>
<dbReference type="InterPro" id="IPR038521">
    <property type="entry name" value="ThiC/Bza_core_dom"/>
</dbReference>
<dbReference type="InterPro" id="IPR002817">
    <property type="entry name" value="ThiC/BzaA/B"/>
</dbReference>
<dbReference type="NCBIfam" id="NF006763">
    <property type="entry name" value="PRK09284.1"/>
    <property type="match status" value="1"/>
</dbReference>
<dbReference type="NCBIfam" id="NF009895">
    <property type="entry name" value="PRK13352.1"/>
    <property type="match status" value="1"/>
</dbReference>
<dbReference type="NCBIfam" id="TIGR00190">
    <property type="entry name" value="thiC"/>
    <property type="match status" value="1"/>
</dbReference>
<dbReference type="PANTHER" id="PTHR30557:SF1">
    <property type="entry name" value="PHOSPHOMETHYLPYRIMIDINE SYNTHASE, CHLOROPLASTIC"/>
    <property type="match status" value="1"/>
</dbReference>
<dbReference type="PANTHER" id="PTHR30557">
    <property type="entry name" value="THIAMINE BIOSYNTHESIS PROTEIN THIC"/>
    <property type="match status" value="1"/>
</dbReference>
<dbReference type="Pfam" id="PF01964">
    <property type="entry name" value="ThiC_Rad_SAM"/>
    <property type="match status" value="1"/>
</dbReference>
<dbReference type="SFLD" id="SFLDF00407">
    <property type="entry name" value="phosphomethylpyrimidine_syntha"/>
    <property type="match status" value="1"/>
</dbReference>
<dbReference type="SFLD" id="SFLDG01114">
    <property type="entry name" value="phosphomethylpyrimidine_syntha"/>
    <property type="match status" value="1"/>
</dbReference>
<dbReference type="SFLD" id="SFLDS00113">
    <property type="entry name" value="Radical_SAM_Phosphomethylpyrim"/>
    <property type="match status" value="1"/>
</dbReference>
<protein>
    <recommendedName>
        <fullName evidence="1">Phosphomethylpyrimidine synthase</fullName>
        <ecNumber evidence="1">4.1.99.17</ecNumber>
    </recommendedName>
    <alternativeName>
        <fullName evidence="1">Hydroxymethylpyrimidine phosphate synthase</fullName>
        <shortName evidence="1">HMP-P synthase</shortName>
        <shortName evidence="1">HMP-phosphate synthase</shortName>
        <shortName evidence="1">HMPP synthase</shortName>
    </alternativeName>
    <alternativeName>
        <fullName evidence="1">Thiamine biosynthesis protein ThiC</fullName>
    </alternativeName>
</protein>
<keyword id="KW-0004">4Fe-4S</keyword>
<keyword id="KW-0408">Iron</keyword>
<keyword id="KW-0411">Iron-sulfur</keyword>
<keyword id="KW-0456">Lyase</keyword>
<keyword id="KW-0479">Metal-binding</keyword>
<keyword id="KW-0949">S-adenosyl-L-methionine</keyword>
<keyword id="KW-0784">Thiamine biosynthesis</keyword>
<keyword id="KW-0862">Zinc</keyword>
<sequence>MRNSWVASRKGKTNVSQMHFARKGEITEEMRYVAKRENLPESLVMEEVARGRMIIPANINHINLEPMAIGIASTCKVNANIGASPNASDISEELKKLDLAVKYGADTLMDLSTGGVNLDEVRTEIINASPIPIGTVPVYQALESVHGSISRLNEDDFLHIIEKHCQQGVDYQTIHAGLLIEHLPKVKGRITGIVSRGGGILAQWMLYHYKQNPLFTRFDDICEIFKRYDCTFSLGDSLRPGCLHDASDEAQLAELKTLGELTRRAWKHDVQVMVEGPGHVPMDQIEFNVRKQMEECSEAPFYVLGPLVTDISPGYDHISSAIGAAMAGWYGTAMLCYVTPKEHLGLPNPEDVREGLIAYKIAAHAADVARHRSGARDRDDELSKARKEFDWNKQFELSLDPEKAKQYHDETLPEEIFKKAEFCSMCGPNHCPMNTKITDEDLDQLNDQIQSKGAAELTPVKLNKEN</sequence>
<proteinExistence type="inferred from homology"/>
<reference key="1">
    <citation type="journal article" date="2007" name="PLoS Genet.">
        <title>Patterns and implications of gene gain and loss in the evolution of Prochlorococcus.</title>
        <authorList>
            <person name="Kettler G.C."/>
            <person name="Martiny A.C."/>
            <person name="Huang K."/>
            <person name="Zucker J."/>
            <person name="Coleman M.L."/>
            <person name="Rodrigue S."/>
            <person name="Chen F."/>
            <person name="Lapidus A."/>
            <person name="Ferriera S."/>
            <person name="Johnson J."/>
            <person name="Steglich C."/>
            <person name="Church G.M."/>
            <person name="Richardson P."/>
            <person name="Chisholm S.W."/>
        </authorList>
    </citation>
    <scope>NUCLEOTIDE SEQUENCE [LARGE SCALE GENOMIC DNA]</scope>
    <source>
        <strain>NATL1A</strain>
    </source>
</reference>
<name>THIC_PROM1</name>
<comment type="function">
    <text evidence="1">Catalyzes the synthesis of the hydroxymethylpyrimidine phosphate (HMP-P) moiety of thiamine from aminoimidazole ribotide (AIR) in a radical S-adenosyl-L-methionine (SAM)-dependent reaction.</text>
</comment>
<comment type="catalytic activity">
    <reaction evidence="1">
        <text>5-amino-1-(5-phospho-beta-D-ribosyl)imidazole + S-adenosyl-L-methionine = 4-amino-2-methyl-5-(phosphooxymethyl)pyrimidine + CO + 5'-deoxyadenosine + formate + L-methionine + 3 H(+)</text>
        <dbReference type="Rhea" id="RHEA:24840"/>
        <dbReference type="ChEBI" id="CHEBI:15378"/>
        <dbReference type="ChEBI" id="CHEBI:15740"/>
        <dbReference type="ChEBI" id="CHEBI:17245"/>
        <dbReference type="ChEBI" id="CHEBI:17319"/>
        <dbReference type="ChEBI" id="CHEBI:57844"/>
        <dbReference type="ChEBI" id="CHEBI:58354"/>
        <dbReference type="ChEBI" id="CHEBI:59789"/>
        <dbReference type="ChEBI" id="CHEBI:137981"/>
        <dbReference type="EC" id="4.1.99.17"/>
    </reaction>
</comment>
<comment type="cofactor">
    <cofactor evidence="1">
        <name>[4Fe-4S] cluster</name>
        <dbReference type="ChEBI" id="CHEBI:49883"/>
    </cofactor>
    <text evidence="1">Binds 1 [4Fe-4S] cluster per subunit. The cluster is coordinated with 3 cysteines and an exchangeable S-adenosyl-L-methionine.</text>
</comment>
<comment type="pathway">
    <text evidence="1">Cofactor biosynthesis; thiamine diphosphate biosynthesis.</text>
</comment>
<comment type="similarity">
    <text evidence="1">Belongs to the ThiC family.</text>
</comment>